<gene>
    <name evidence="1" type="primary">recR</name>
    <name type="ordered locus">Tfu_0044</name>
</gene>
<name>RECR_THEFY</name>
<accession>Q47TY2</accession>
<protein>
    <recommendedName>
        <fullName evidence="1">Recombination protein RecR</fullName>
    </recommendedName>
</protein>
<proteinExistence type="inferred from homology"/>
<feature type="chain" id="PRO_0000322967" description="Recombination protein RecR">
    <location>
        <begin position="1"/>
        <end position="199"/>
    </location>
</feature>
<feature type="domain" description="Toprim" evidence="1">
    <location>
        <begin position="79"/>
        <end position="174"/>
    </location>
</feature>
<feature type="zinc finger region" description="C4-type" evidence="1">
    <location>
        <begin position="56"/>
        <end position="71"/>
    </location>
</feature>
<organism>
    <name type="scientific">Thermobifida fusca (strain YX)</name>
    <dbReference type="NCBI Taxonomy" id="269800"/>
    <lineage>
        <taxon>Bacteria</taxon>
        <taxon>Bacillati</taxon>
        <taxon>Actinomycetota</taxon>
        <taxon>Actinomycetes</taxon>
        <taxon>Streptosporangiales</taxon>
        <taxon>Nocardiopsidaceae</taxon>
        <taxon>Thermobifida</taxon>
    </lineage>
</organism>
<evidence type="ECO:0000255" key="1">
    <source>
        <dbReference type="HAMAP-Rule" id="MF_00017"/>
    </source>
</evidence>
<keyword id="KW-0227">DNA damage</keyword>
<keyword id="KW-0233">DNA recombination</keyword>
<keyword id="KW-0234">DNA repair</keyword>
<keyword id="KW-0479">Metal-binding</keyword>
<keyword id="KW-0862">Zinc</keyword>
<keyword id="KW-0863">Zinc-finger</keyword>
<sequence length="199" mass="21794">MYEGAVQNLIDELGRLPGVGPKSAQRIAFHLLAAETADVHRLVNALVAVKERVRFCAVCGNIAEETQCRICRDPRRDDTVICVVEEPKDVVAIERTREFRGRYHVLGGAISPIEGVGPDDLRVKELMARLSEGRVTEVILATDPNLEGEATATYLARLLKPMGLKVTRLASGLPVGGDLEYADEVTLGRAFEGRRALDF</sequence>
<dbReference type="EMBL" id="CP000088">
    <property type="protein sequence ID" value="AAZ54082.1"/>
    <property type="molecule type" value="Genomic_DNA"/>
</dbReference>
<dbReference type="RefSeq" id="WP_011290491.1">
    <property type="nucleotide sequence ID" value="NC_007333.1"/>
</dbReference>
<dbReference type="SMR" id="Q47TY2"/>
<dbReference type="STRING" id="269800.Tfu_0044"/>
<dbReference type="KEGG" id="tfu:Tfu_0044"/>
<dbReference type="eggNOG" id="COG0353">
    <property type="taxonomic scope" value="Bacteria"/>
</dbReference>
<dbReference type="HOGENOM" id="CLU_060739_1_0_11"/>
<dbReference type="OrthoDB" id="9802672at2"/>
<dbReference type="GO" id="GO:0003677">
    <property type="term" value="F:DNA binding"/>
    <property type="evidence" value="ECO:0007669"/>
    <property type="project" value="UniProtKB-UniRule"/>
</dbReference>
<dbReference type="GO" id="GO:0008270">
    <property type="term" value="F:zinc ion binding"/>
    <property type="evidence" value="ECO:0007669"/>
    <property type="project" value="UniProtKB-KW"/>
</dbReference>
<dbReference type="GO" id="GO:0006310">
    <property type="term" value="P:DNA recombination"/>
    <property type="evidence" value="ECO:0007669"/>
    <property type="project" value="UniProtKB-UniRule"/>
</dbReference>
<dbReference type="GO" id="GO:0006281">
    <property type="term" value="P:DNA repair"/>
    <property type="evidence" value="ECO:0007669"/>
    <property type="project" value="UniProtKB-UniRule"/>
</dbReference>
<dbReference type="CDD" id="cd01025">
    <property type="entry name" value="TOPRIM_recR"/>
    <property type="match status" value="1"/>
</dbReference>
<dbReference type="Gene3D" id="3.30.60.80">
    <property type="match status" value="1"/>
</dbReference>
<dbReference type="Gene3D" id="3.40.1360.10">
    <property type="match status" value="1"/>
</dbReference>
<dbReference type="Gene3D" id="6.10.250.240">
    <property type="match status" value="1"/>
</dbReference>
<dbReference type="Gene3D" id="1.10.8.420">
    <property type="entry name" value="RecR Domain 1"/>
    <property type="match status" value="1"/>
</dbReference>
<dbReference type="HAMAP" id="MF_00017">
    <property type="entry name" value="RecR"/>
    <property type="match status" value="1"/>
</dbReference>
<dbReference type="InterPro" id="IPR000093">
    <property type="entry name" value="DNA_Rcmb_RecR"/>
</dbReference>
<dbReference type="InterPro" id="IPR023627">
    <property type="entry name" value="Rcmb_RecR"/>
</dbReference>
<dbReference type="InterPro" id="IPR015967">
    <property type="entry name" value="Rcmb_RecR_Znf"/>
</dbReference>
<dbReference type="InterPro" id="IPR006171">
    <property type="entry name" value="TOPRIM_dom"/>
</dbReference>
<dbReference type="InterPro" id="IPR034137">
    <property type="entry name" value="TOPRIM_RecR"/>
</dbReference>
<dbReference type="NCBIfam" id="TIGR00615">
    <property type="entry name" value="recR"/>
    <property type="match status" value="1"/>
</dbReference>
<dbReference type="PANTHER" id="PTHR30446">
    <property type="entry name" value="RECOMBINATION PROTEIN RECR"/>
    <property type="match status" value="1"/>
</dbReference>
<dbReference type="PANTHER" id="PTHR30446:SF0">
    <property type="entry name" value="RECOMBINATION PROTEIN RECR"/>
    <property type="match status" value="1"/>
</dbReference>
<dbReference type="Pfam" id="PF21175">
    <property type="entry name" value="RecR_C"/>
    <property type="match status" value="1"/>
</dbReference>
<dbReference type="Pfam" id="PF21176">
    <property type="entry name" value="RecR_HhH"/>
    <property type="match status" value="1"/>
</dbReference>
<dbReference type="Pfam" id="PF02132">
    <property type="entry name" value="RecR_ZnF"/>
    <property type="match status" value="1"/>
</dbReference>
<dbReference type="Pfam" id="PF13662">
    <property type="entry name" value="Toprim_4"/>
    <property type="match status" value="1"/>
</dbReference>
<dbReference type="SMART" id="SM00493">
    <property type="entry name" value="TOPRIM"/>
    <property type="match status" value="1"/>
</dbReference>
<dbReference type="SUPFAM" id="SSF111304">
    <property type="entry name" value="Recombination protein RecR"/>
    <property type="match status" value="1"/>
</dbReference>
<dbReference type="PROSITE" id="PS01300">
    <property type="entry name" value="RECR"/>
    <property type="match status" value="1"/>
</dbReference>
<dbReference type="PROSITE" id="PS50880">
    <property type="entry name" value="TOPRIM"/>
    <property type="match status" value="1"/>
</dbReference>
<reference key="1">
    <citation type="journal article" date="2007" name="J. Bacteriol.">
        <title>Genome sequence and analysis of the soil cellulolytic actinomycete Thermobifida fusca YX.</title>
        <authorList>
            <person name="Lykidis A."/>
            <person name="Mavromatis K."/>
            <person name="Ivanova N."/>
            <person name="Anderson I."/>
            <person name="Land M."/>
            <person name="DiBartolo G."/>
            <person name="Martinez M."/>
            <person name="Lapidus A."/>
            <person name="Lucas S."/>
            <person name="Copeland A."/>
            <person name="Richardson P."/>
            <person name="Wilson D.B."/>
            <person name="Kyrpides N."/>
        </authorList>
    </citation>
    <scope>NUCLEOTIDE SEQUENCE [LARGE SCALE GENOMIC DNA]</scope>
    <source>
        <strain>YX</strain>
    </source>
</reference>
<comment type="function">
    <text evidence="1">May play a role in DNA repair. It seems to be involved in an RecBC-independent recombinational process of DNA repair. It may act with RecF and RecO.</text>
</comment>
<comment type="similarity">
    <text evidence="1">Belongs to the RecR family.</text>
</comment>